<sequence length="87" mass="9786">MSKPESCDENACKPFACAIQDCLIENGYNESKCTKAIDNLYKCCKQFYEENGPDAASVCCPKFNLLQLKLKQRSLGKIDAELIQSRK</sequence>
<evidence type="ECO:0000250" key="1"/>
<evidence type="ECO:0000255" key="2">
    <source>
        <dbReference type="PROSITE-ProRule" id="PRU01150"/>
    </source>
</evidence>
<evidence type="ECO:0000305" key="3"/>
<protein>
    <recommendedName>
        <fullName>Cx9C motif-containing protein 4, mitochondrial</fullName>
    </recommendedName>
</protein>
<proteinExistence type="inferred from homology"/>
<keyword id="KW-1015">Disulfide bond</keyword>
<keyword id="KW-0496">Mitochondrion</keyword>
<keyword id="KW-1185">Reference proteome</keyword>
<keyword id="KW-0677">Repeat</keyword>
<dbReference type="EMBL" id="CH408078">
    <property type="protein sequence ID" value="EEQ38630.1"/>
    <property type="molecule type" value="Genomic_DNA"/>
</dbReference>
<dbReference type="RefSeq" id="XP_002617312.1">
    <property type="nucleotide sequence ID" value="XM_002617266.1"/>
</dbReference>
<dbReference type="SMR" id="C4Y2J3"/>
<dbReference type="FunCoup" id="C4Y2J3">
    <property type="interactions" value="84"/>
</dbReference>
<dbReference type="STRING" id="306902.C4Y2J3"/>
<dbReference type="GeneID" id="8498037"/>
<dbReference type="KEGG" id="clu:CLUG_02756"/>
<dbReference type="VEuPathDB" id="FungiDB:CLUG_02756"/>
<dbReference type="HOGENOM" id="CLU_177210_0_1_1"/>
<dbReference type="InParanoid" id="C4Y2J3"/>
<dbReference type="OMA" id="YQEEKCQ"/>
<dbReference type="OrthoDB" id="23706at4891"/>
<dbReference type="Proteomes" id="UP000007703">
    <property type="component" value="Unassembled WGS sequence"/>
</dbReference>
<dbReference type="GO" id="GO:0005758">
    <property type="term" value="C:mitochondrial intermembrane space"/>
    <property type="evidence" value="ECO:0007669"/>
    <property type="project" value="UniProtKB-SubCell"/>
</dbReference>
<dbReference type="FunFam" id="1.10.287.1130:FF:000008">
    <property type="entry name" value="Cx9C motif-containing protein 4, mitochondrial"/>
    <property type="match status" value="1"/>
</dbReference>
<dbReference type="Gene3D" id="1.10.287.1130">
    <property type="entry name" value="CytochromE C oxidase copper chaperone"/>
    <property type="match status" value="1"/>
</dbReference>
<dbReference type="InterPro" id="IPR027179">
    <property type="entry name" value="CMC4"/>
</dbReference>
<dbReference type="InterPro" id="IPR009069">
    <property type="entry name" value="Cys_alpha_HP_mot_SF"/>
</dbReference>
<dbReference type="PANTHER" id="PTHR15590">
    <property type="entry name" value="CX9C MOTIF-CONTAINING PROTEIN 4"/>
    <property type="match status" value="1"/>
</dbReference>
<dbReference type="PANTHER" id="PTHR15590:SF0">
    <property type="entry name" value="CX9C MOTIF-CONTAINING PROTEIN 4"/>
    <property type="match status" value="1"/>
</dbReference>
<dbReference type="Pfam" id="PF08991">
    <property type="entry name" value="CMC4"/>
    <property type="match status" value="1"/>
</dbReference>
<dbReference type="SUPFAM" id="SSF47072">
    <property type="entry name" value="Cysteine alpha-hairpin motif"/>
    <property type="match status" value="1"/>
</dbReference>
<dbReference type="PROSITE" id="PS51808">
    <property type="entry name" value="CHCH"/>
    <property type="match status" value="1"/>
</dbReference>
<name>CMC4_CLAL4</name>
<feature type="chain" id="PRO_0000408573" description="Cx9C motif-containing protein 4, mitochondrial">
    <location>
        <begin position="1"/>
        <end position="87"/>
    </location>
</feature>
<feature type="domain" description="CHCH" evidence="2">
    <location>
        <begin position="9"/>
        <end position="51"/>
    </location>
</feature>
<feature type="short sequence motif" description="Cx9C motif 1" evidence="2">
    <location>
        <begin position="12"/>
        <end position="22"/>
    </location>
</feature>
<feature type="short sequence motif" description="Cx9C motif 2" evidence="2">
    <location>
        <begin position="33"/>
        <end position="43"/>
    </location>
</feature>
<feature type="disulfide bond" evidence="2">
    <location>
        <begin position="12"/>
        <end position="43"/>
    </location>
</feature>
<feature type="disulfide bond" evidence="2">
    <location>
        <begin position="22"/>
        <end position="33"/>
    </location>
</feature>
<accession>C4Y2J3</accession>
<gene>
    <name type="primary">CMC4</name>
    <name type="ORF">CLUG_02756</name>
</gene>
<comment type="subcellular location">
    <subcellularLocation>
        <location evidence="1">Mitochondrion intermembrane space</location>
    </subcellularLocation>
    <text evidence="1">Imported into the mitochondria via the mitochondrial disulfide relay system.</text>
</comment>
<comment type="domain">
    <text evidence="1">The twin Cx9C motifs are involved in the recognition by the mitochondrial disulfide relay system.</text>
</comment>
<comment type="similarity">
    <text evidence="3">Belongs to the CMC4 family.</text>
</comment>
<organism>
    <name type="scientific">Clavispora lusitaniae (strain ATCC 42720)</name>
    <name type="common">Yeast</name>
    <name type="synonym">Candida lusitaniae</name>
    <dbReference type="NCBI Taxonomy" id="306902"/>
    <lineage>
        <taxon>Eukaryota</taxon>
        <taxon>Fungi</taxon>
        <taxon>Dikarya</taxon>
        <taxon>Ascomycota</taxon>
        <taxon>Saccharomycotina</taxon>
        <taxon>Pichiomycetes</taxon>
        <taxon>Metschnikowiaceae</taxon>
        <taxon>Clavispora</taxon>
    </lineage>
</organism>
<reference key="1">
    <citation type="journal article" date="2009" name="Nature">
        <title>Evolution of pathogenicity and sexual reproduction in eight Candida genomes.</title>
        <authorList>
            <person name="Butler G."/>
            <person name="Rasmussen M.D."/>
            <person name="Lin M.F."/>
            <person name="Santos M.A.S."/>
            <person name="Sakthikumar S."/>
            <person name="Munro C.A."/>
            <person name="Rheinbay E."/>
            <person name="Grabherr M."/>
            <person name="Forche A."/>
            <person name="Reedy J.L."/>
            <person name="Agrafioti I."/>
            <person name="Arnaud M.B."/>
            <person name="Bates S."/>
            <person name="Brown A.J.P."/>
            <person name="Brunke S."/>
            <person name="Costanzo M.C."/>
            <person name="Fitzpatrick D.A."/>
            <person name="de Groot P.W.J."/>
            <person name="Harris D."/>
            <person name="Hoyer L.L."/>
            <person name="Hube B."/>
            <person name="Klis F.M."/>
            <person name="Kodira C."/>
            <person name="Lennard N."/>
            <person name="Logue M.E."/>
            <person name="Martin R."/>
            <person name="Neiman A.M."/>
            <person name="Nikolaou E."/>
            <person name="Quail M.A."/>
            <person name="Quinn J."/>
            <person name="Santos M.C."/>
            <person name="Schmitzberger F.F."/>
            <person name="Sherlock G."/>
            <person name="Shah P."/>
            <person name="Silverstein K.A.T."/>
            <person name="Skrzypek M.S."/>
            <person name="Soll D."/>
            <person name="Staggs R."/>
            <person name="Stansfield I."/>
            <person name="Stumpf M.P.H."/>
            <person name="Sudbery P.E."/>
            <person name="Srikantha T."/>
            <person name="Zeng Q."/>
            <person name="Berman J."/>
            <person name="Berriman M."/>
            <person name="Heitman J."/>
            <person name="Gow N.A.R."/>
            <person name="Lorenz M.C."/>
            <person name="Birren B.W."/>
            <person name="Kellis M."/>
            <person name="Cuomo C.A."/>
        </authorList>
    </citation>
    <scope>NUCLEOTIDE SEQUENCE [LARGE SCALE GENOMIC DNA]</scope>
    <source>
        <strain>ATCC 42720</strain>
    </source>
</reference>